<proteinExistence type="evidence at transcript level"/>
<feature type="chain" id="PRO_0000310268" description="Cytosolic purine 5'-nucleotidase">
    <location>
        <begin position="1"/>
        <end position="568"/>
    </location>
</feature>
<feature type="region of interest" description="Disordered" evidence="3">
    <location>
        <begin position="528"/>
        <end position="568"/>
    </location>
</feature>
<feature type="region of interest" description="Required for tetramer assembly" evidence="2">
    <location>
        <begin position="548"/>
        <end position="568"/>
    </location>
</feature>
<feature type="compositionally biased region" description="Acidic residues" evidence="3">
    <location>
        <begin position="550"/>
        <end position="568"/>
    </location>
</feature>
<feature type="active site" description="Nucleophile" evidence="2">
    <location>
        <position position="52"/>
    </location>
</feature>
<feature type="active site" description="Proton donor" evidence="2">
    <location>
        <position position="54"/>
    </location>
</feature>
<feature type="binding site" evidence="2">
    <location>
        <position position="52"/>
    </location>
    <ligand>
        <name>IMP</name>
        <dbReference type="ChEBI" id="CHEBI:58053"/>
    </ligand>
</feature>
<feature type="binding site" evidence="2">
    <location>
        <position position="52"/>
    </location>
    <ligand>
        <name>Mg(2+)</name>
        <dbReference type="ChEBI" id="CHEBI:18420"/>
    </ligand>
</feature>
<feature type="binding site" evidence="2">
    <location>
        <position position="54"/>
    </location>
    <ligand>
        <name>IMP</name>
        <dbReference type="ChEBI" id="CHEBI:58053"/>
    </ligand>
</feature>
<feature type="binding site" evidence="2">
    <location>
        <position position="54"/>
    </location>
    <ligand>
        <name>Mg(2+)</name>
        <dbReference type="ChEBI" id="CHEBI:18420"/>
    </ligand>
</feature>
<feature type="binding site" evidence="2">
    <location>
        <position position="144"/>
    </location>
    <ligand>
        <name>ATP</name>
        <dbReference type="ChEBI" id="CHEBI:30616"/>
        <note>allosteric activator</note>
    </ligand>
</feature>
<feature type="binding site" evidence="2">
    <location>
        <position position="154"/>
    </location>
    <ligand>
        <name>ATP</name>
        <dbReference type="ChEBI" id="CHEBI:30616"/>
        <note>allosteric activator</note>
    </ligand>
</feature>
<feature type="binding site" evidence="2">
    <location>
        <position position="202"/>
    </location>
    <ligand>
        <name>IMP</name>
        <dbReference type="ChEBI" id="CHEBI:58053"/>
    </ligand>
</feature>
<feature type="binding site" evidence="2">
    <location>
        <position position="206"/>
    </location>
    <ligand>
        <name>IMP</name>
        <dbReference type="ChEBI" id="CHEBI:58053"/>
    </ligand>
</feature>
<feature type="binding site" evidence="2">
    <location>
        <position position="215"/>
    </location>
    <ligand>
        <name>IMP</name>
        <dbReference type="ChEBI" id="CHEBI:58053"/>
    </ligand>
</feature>
<feature type="binding site" evidence="2">
    <location>
        <position position="249"/>
    </location>
    <ligand>
        <name>IMP</name>
        <dbReference type="ChEBI" id="CHEBI:58053"/>
    </ligand>
</feature>
<feature type="binding site" evidence="2">
    <location>
        <position position="250"/>
    </location>
    <ligand>
        <name>IMP</name>
        <dbReference type="ChEBI" id="CHEBI:58053"/>
    </ligand>
</feature>
<feature type="binding site" evidence="2">
    <location>
        <position position="251"/>
    </location>
    <ligand>
        <name>IMP</name>
        <dbReference type="ChEBI" id="CHEBI:58053"/>
    </ligand>
</feature>
<feature type="binding site" evidence="2">
    <location>
        <position position="292"/>
    </location>
    <ligand>
        <name>IMP</name>
        <dbReference type="ChEBI" id="CHEBI:58053"/>
    </ligand>
</feature>
<feature type="binding site" evidence="2">
    <location>
        <position position="351"/>
    </location>
    <ligand>
        <name>Mg(2+)</name>
        <dbReference type="ChEBI" id="CHEBI:18420"/>
    </ligand>
</feature>
<feature type="binding site" evidence="2">
    <location>
        <position position="453"/>
    </location>
    <ligand>
        <name>ATP</name>
        <dbReference type="ChEBI" id="CHEBI:30616"/>
        <note>allosteric activator</note>
    </ligand>
</feature>
<feature type="binding site" evidence="2">
    <location>
        <position position="456"/>
    </location>
    <ligand>
        <name>ATP</name>
        <dbReference type="ChEBI" id="CHEBI:30616"/>
        <note>allosteric activator</note>
    </ligand>
</feature>
<comment type="function">
    <text evidence="2">Broad specificity cytosolic 5'-nucleotidase that catalyzes the dephosphorylation of 6-hydroxypurine nucleoside 5'-monophosphates. In addition, possesses a phosphotransferase activity by which it can transfer a phosphate from a donor nucleoside monophosphate to an acceptor nucleoside, preferably inosine, deoxyinosine and guanosine. Has the highest activities for IMP and GMP followed by dIMP, dGMP and XMP. Could also catalyze the transfer of phosphates from pyrimidine monophosphates but with lower efficiency. Through these activities regulates the purine nucleoside/nucleotide pools within the cell.</text>
</comment>
<comment type="catalytic activity">
    <reaction evidence="2">
        <text>a ribonucleoside 5'-phosphate + H2O = a ribonucleoside + phosphate</text>
        <dbReference type="Rhea" id="RHEA:12484"/>
        <dbReference type="ChEBI" id="CHEBI:15377"/>
        <dbReference type="ChEBI" id="CHEBI:18254"/>
        <dbReference type="ChEBI" id="CHEBI:43474"/>
        <dbReference type="ChEBI" id="CHEBI:58043"/>
        <dbReference type="EC" id="3.1.3.5"/>
    </reaction>
    <physiologicalReaction direction="left-to-right" evidence="2">
        <dbReference type="Rhea" id="RHEA:12485"/>
    </physiologicalReaction>
</comment>
<comment type="catalytic activity">
    <reaction evidence="2">
        <text>a 2'-deoxyribonucleoside + a ribonucleoside 5'-phosphate = a ribonucleoside + a 2'-deoxyribonucleoside 5'-phosphate</text>
        <dbReference type="Rhea" id="RHEA:19961"/>
        <dbReference type="ChEBI" id="CHEBI:18254"/>
        <dbReference type="ChEBI" id="CHEBI:18274"/>
        <dbReference type="ChEBI" id="CHEBI:58043"/>
        <dbReference type="ChEBI" id="CHEBI:65317"/>
        <dbReference type="EC" id="2.7.1.77"/>
    </reaction>
</comment>
<comment type="catalytic activity">
    <reaction evidence="2">
        <text>IMP + H2O = inosine + phosphate</text>
        <dbReference type="Rhea" id="RHEA:27718"/>
        <dbReference type="ChEBI" id="CHEBI:15377"/>
        <dbReference type="ChEBI" id="CHEBI:17596"/>
        <dbReference type="ChEBI" id="CHEBI:43474"/>
        <dbReference type="ChEBI" id="CHEBI:58053"/>
        <dbReference type="EC" id="3.1.3.99"/>
    </reaction>
    <physiologicalReaction direction="left-to-right" evidence="2">
        <dbReference type="Rhea" id="RHEA:27719"/>
    </physiologicalReaction>
</comment>
<comment type="catalytic activity">
    <reaction evidence="1">
        <text>GMP + H2O = guanosine + phosphate</text>
        <dbReference type="Rhea" id="RHEA:27714"/>
        <dbReference type="ChEBI" id="CHEBI:15377"/>
        <dbReference type="ChEBI" id="CHEBI:16750"/>
        <dbReference type="ChEBI" id="CHEBI:43474"/>
        <dbReference type="ChEBI" id="CHEBI:58115"/>
    </reaction>
    <physiologicalReaction direction="left-to-right" evidence="1">
        <dbReference type="Rhea" id="RHEA:27715"/>
    </physiologicalReaction>
</comment>
<comment type="catalytic activity">
    <reaction evidence="1">
        <text>dIMP + H2O = 2'-deoxyinosine + phosphate</text>
        <dbReference type="Rhea" id="RHEA:29383"/>
        <dbReference type="ChEBI" id="CHEBI:15377"/>
        <dbReference type="ChEBI" id="CHEBI:28997"/>
        <dbReference type="ChEBI" id="CHEBI:43474"/>
        <dbReference type="ChEBI" id="CHEBI:61194"/>
    </reaction>
    <physiologicalReaction direction="left-to-right" evidence="1">
        <dbReference type="Rhea" id="RHEA:29384"/>
    </physiologicalReaction>
</comment>
<comment type="catalytic activity">
    <reaction evidence="2">
        <text>dGMP + H2O = 2'-deoxyguanosine + phosphate</text>
        <dbReference type="Rhea" id="RHEA:29379"/>
        <dbReference type="ChEBI" id="CHEBI:15377"/>
        <dbReference type="ChEBI" id="CHEBI:17172"/>
        <dbReference type="ChEBI" id="CHEBI:43474"/>
        <dbReference type="ChEBI" id="CHEBI:57673"/>
    </reaction>
    <physiologicalReaction direction="left-to-right" evidence="2">
        <dbReference type="Rhea" id="RHEA:29380"/>
    </physiologicalReaction>
</comment>
<comment type="catalytic activity">
    <reaction evidence="1">
        <text>XMP + H2O = xanthosine + phosphate</text>
        <dbReference type="Rhea" id="RHEA:28530"/>
        <dbReference type="ChEBI" id="CHEBI:15377"/>
        <dbReference type="ChEBI" id="CHEBI:18107"/>
        <dbReference type="ChEBI" id="CHEBI:43474"/>
        <dbReference type="ChEBI" id="CHEBI:57464"/>
    </reaction>
    <physiologicalReaction direction="left-to-right" evidence="1">
        <dbReference type="Rhea" id="RHEA:28531"/>
    </physiologicalReaction>
</comment>
<comment type="catalytic activity">
    <reaction evidence="2">
        <text>inosine + GMP = guanosine + IMP</text>
        <dbReference type="Rhea" id="RHEA:69584"/>
        <dbReference type="ChEBI" id="CHEBI:16750"/>
        <dbReference type="ChEBI" id="CHEBI:17596"/>
        <dbReference type="ChEBI" id="CHEBI:58053"/>
        <dbReference type="ChEBI" id="CHEBI:58115"/>
    </reaction>
</comment>
<comment type="catalytic activity">
    <reaction evidence="2">
        <text>dGMP + inosine = 2'-deoxyguanosine + IMP</text>
        <dbReference type="Rhea" id="RHEA:69580"/>
        <dbReference type="ChEBI" id="CHEBI:17172"/>
        <dbReference type="ChEBI" id="CHEBI:17596"/>
        <dbReference type="ChEBI" id="CHEBI:57673"/>
        <dbReference type="ChEBI" id="CHEBI:58053"/>
    </reaction>
</comment>
<comment type="catalytic activity">
    <reaction evidence="2">
        <text>dIMP + inosine = 2'-deoxyinosine + IMP</text>
        <dbReference type="Rhea" id="RHEA:69572"/>
        <dbReference type="ChEBI" id="CHEBI:17596"/>
        <dbReference type="ChEBI" id="CHEBI:28997"/>
        <dbReference type="ChEBI" id="CHEBI:58053"/>
        <dbReference type="ChEBI" id="CHEBI:61194"/>
    </reaction>
</comment>
<comment type="catalytic activity">
    <reaction evidence="2">
        <text>inosine + UMP = uridine + IMP</text>
        <dbReference type="Rhea" id="RHEA:69588"/>
        <dbReference type="ChEBI" id="CHEBI:16704"/>
        <dbReference type="ChEBI" id="CHEBI:17596"/>
        <dbReference type="ChEBI" id="CHEBI:57865"/>
        <dbReference type="ChEBI" id="CHEBI:58053"/>
    </reaction>
</comment>
<comment type="catalytic activity">
    <reaction evidence="2">
        <text>inosine + CMP = cytidine + IMP</text>
        <dbReference type="Rhea" id="RHEA:69592"/>
        <dbReference type="ChEBI" id="CHEBI:17562"/>
        <dbReference type="ChEBI" id="CHEBI:17596"/>
        <dbReference type="ChEBI" id="CHEBI:58053"/>
        <dbReference type="ChEBI" id="CHEBI:60377"/>
    </reaction>
</comment>
<comment type="catalytic activity">
    <reaction evidence="2">
        <text>inosine + AMP = IMP + adenosine</text>
        <dbReference type="Rhea" id="RHEA:69596"/>
        <dbReference type="ChEBI" id="CHEBI:16335"/>
        <dbReference type="ChEBI" id="CHEBI:17596"/>
        <dbReference type="ChEBI" id="CHEBI:58053"/>
        <dbReference type="ChEBI" id="CHEBI:456215"/>
    </reaction>
</comment>
<comment type="cofactor">
    <cofactor evidence="2">
        <name>Mg(2+)</name>
        <dbReference type="ChEBI" id="CHEBI:18420"/>
    </cofactor>
    <text evidence="2">Binds 1 Mg(2+) ion per subunit.</text>
</comment>
<comment type="activity regulation">
    <text evidence="2">Allosterically activated by various compounds including ATP, 2,3-BPG/2,3-Bisphosphoglyceric acid and Ap4A/P1,P4-bis(5'-adenosyl) tetraphosphate. Binding of an allosteric activator is a prerequisiste to magnesium and substrate binding. Inhibited by inorganic phosphate.</text>
</comment>
<comment type="subunit">
    <text evidence="2">Homotetramer.</text>
</comment>
<comment type="subcellular location">
    <subcellularLocation>
        <location evidence="2">Cytoplasm</location>
        <location evidence="2">Cytosol</location>
    </subcellularLocation>
</comment>
<comment type="similarity">
    <text evidence="4">Belongs to the 5'(3')-deoxyribonucleotidase family.</text>
</comment>
<sequence>MTTSWSDRLQNAADLPANMDGHALKKYRREAYHRVFVNRSLAMEKIKCFGFDMDYTLAVYKSPEYESLGFDLTVERLVSIGYPQELLNFVYDPTFPTRGLVFDSTYGNLLKVDAYGNILVCAHGFNFMRGPEIREQYPNKFIQRDDTDRFYILNTLFNLPETYLLACLVDFFTNCDRYTSCEMGFKDGDLFMSFRSMFQDVRDAVDWVHYKGSLKEKTVENLPKYVVKDPKLPLLLSRMNEVGKVFLVTNSDYKYTHKIMTYLFDLPHGPKPGSSHRLWQTYFDLILVDARKPLFFGEGTVLRQVDTNTGKLKIGTYTGPLQHGIVYSGGSSDIVCDLLGAKGKDILYIGDHIFGDILKSKKRQGWRTFLVIPELAQELHVWTDKSSLFEELQSLDIFLAELYKHLDSSSNERPDISSIQRRIKKVTHDMDMCYGMMGSLFRSGSRQTLFASQVMRYADLYAASFINLLYYPFSYLFRAAHVLMPHESTVEHTHVDIHETESPMATRNRCSLDFKDSDFKRHQLTRSISEIKPPNLFPQKPQEITHCHDEDDDEEEEEEEEEEEEEEE</sequence>
<protein>
    <recommendedName>
        <fullName evidence="2">Cytosolic purine 5'-nucleotidase</fullName>
        <ecNumber evidence="2">3.1.3.5</ecNumber>
        <ecNumber evidence="2">3.1.3.99</ecNumber>
    </recommendedName>
    <alternativeName>
        <fullName evidence="2">Cytosolic nucleoside phosphotransferase 5'N</fullName>
        <ecNumber evidence="2">2.7.1.77</ecNumber>
    </alternativeName>
</protein>
<organism>
    <name type="scientific">Xenopus tropicalis</name>
    <name type="common">Western clawed frog</name>
    <name type="synonym">Silurana tropicalis</name>
    <dbReference type="NCBI Taxonomy" id="8364"/>
    <lineage>
        <taxon>Eukaryota</taxon>
        <taxon>Metazoa</taxon>
        <taxon>Chordata</taxon>
        <taxon>Craniata</taxon>
        <taxon>Vertebrata</taxon>
        <taxon>Euteleostomi</taxon>
        <taxon>Amphibia</taxon>
        <taxon>Batrachia</taxon>
        <taxon>Anura</taxon>
        <taxon>Pipoidea</taxon>
        <taxon>Pipidae</taxon>
        <taxon>Xenopodinae</taxon>
        <taxon>Xenopus</taxon>
        <taxon>Silurana</taxon>
    </lineage>
</organism>
<reference key="1">
    <citation type="submission" date="2005-02" db="EMBL/GenBank/DDBJ databases">
        <authorList>
            <consortium name="NIH - Xenopus Gene Collection (XGC) project"/>
        </authorList>
    </citation>
    <scope>NUCLEOTIDE SEQUENCE [LARGE SCALE MRNA]</scope>
</reference>
<name>5NTC_XENTR</name>
<accession>Q5EBF1</accession>
<keyword id="KW-0021">Allosteric enzyme</keyword>
<keyword id="KW-0067">ATP-binding</keyword>
<keyword id="KW-0963">Cytoplasm</keyword>
<keyword id="KW-0378">Hydrolase</keyword>
<keyword id="KW-0460">Magnesium</keyword>
<keyword id="KW-0479">Metal-binding</keyword>
<keyword id="KW-0546">Nucleotide metabolism</keyword>
<keyword id="KW-0547">Nucleotide-binding</keyword>
<keyword id="KW-1185">Reference proteome</keyword>
<keyword id="KW-0808">Transferase</keyword>
<gene>
    <name type="primary">nt5c2</name>
</gene>
<dbReference type="EC" id="3.1.3.5" evidence="2"/>
<dbReference type="EC" id="3.1.3.99" evidence="2"/>
<dbReference type="EC" id="2.7.1.77" evidence="2"/>
<dbReference type="EMBL" id="BC089713">
    <property type="protein sequence ID" value="AAH89713.1"/>
    <property type="molecule type" value="mRNA"/>
</dbReference>
<dbReference type="RefSeq" id="NP_001015773.1">
    <property type="nucleotide sequence ID" value="NM_001015773.1"/>
</dbReference>
<dbReference type="SMR" id="Q5EBF1"/>
<dbReference type="FunCoup" id="Q5EBF1">
    <property type="interactions" value="1273"/>
</dbReference>
<dbReference type="STRING" id="8364.ENSXETP00000004471"/>
<dbReference type="PaxDb" id="8364-ENSXETP00000020900"/>
<dbReference type="DNASU" id="548490"/>
<dbReference type="GeneID" id="548490"/>
<dbReference type="KEGG" id="xtr:548490"/>
<dbReference type="AGR" id="Xenbase:XB-GENE-988875"/>
<dbReference type="CTD" id="22978"/>
<dbReference type="Xenbase" id="XB-GENE-988875">
    <property type="gene designation" value="nt5c2"/>
</dbReference>
<dbReference type="eggNOG" id="KOG2469">
    <property type="taxonomic scope" value="Eukaryota"/>
</dbReference>
<dbReference type="InParanoid" id="Q5EBF1"/>
<dbReference type="OrthoDB" id="10252832at2759"/>
<dbReference type="Reactome" id="R-XTR-2161541">
    <property type="pathway name" value="Abacavir metabolism"/>
</dbReference>
<dbReference type="Reactome" id="R-XTR-74259">
    <property type="pathway name" value="Purine catabolism"/>
</dbReference>
<dbReference type="Reactome" id="R-XTR-9755088">
    <property type="pathway name" value="Ribavirin ADME"/>
</dbReference>
<dbReference type="Proteomes" id="UP000008143">
    <property type="component" value="Chromosome 7"/>
</dbReference>
<dbReference type="GO" id="GO:0005829">
    <property type="term" value="C:cytosol"/>
    <property type="evidence" value="ECO:0000250"/>
    <property type="project" value="UniProtKB"/>
</dbReference>
<dbReference type="GO" id="GO:0008253">
    <property type="term" value="F:5'-nucleotidase activity"/>
    <property type="evidence" value="ECO:0000250"/>
    <property type="project" value="UniProtKB"/>
</dbReference>
<dbReference type="GO" id="GO:0005524">
    <property type="term" value="F:ATP binding"/>
    <property type="evidence" value="ECO:0000250"/>
    <property type="project" value="UniProtKB"/>
</dbReference>
<dbReference type="GO" id="GO:0050484">
    <property type="term" value="F:GMP 5'-nucleotidase activity"/>
    <property type="evidence" value="ECO:0000250"/>
    <property type="project" value="UniProtKB"/>
</dbReference>
<dbReference type="GO" id="GO:0042802">
    <property type="term" value="F:identical protein binding"/>
    <property type="evidence" value="ECO:0000250"/>
    <property type="project" value="UniProtKB"/>
</dbReference>
<dbReference type="GO" id="GO:0050483">
    <property type="term" value="F:IMP 5'-nucleotidase activity"/>
    <property type="evidence" value="ECO:0000250"/>
    <property type="project" value="UniProtKB"/>
</dbReference>
<dbReference type="GO" id="GO:0046872">
    <property type="term" value="F:metal ion binding"/>
    <property type="evidence" value="ECO:0007669"/>
    <property type="project" value="UniProtKB-KW"/>
</dbReference>
<dbReference type="GO" id="GO:0050146">
    <property type="term" value="F:nucleoside phosphotransferase activity"/>
    <property type="evidence" value="ECO:0000250"/>
    <property type="project" value="UniProtKB"/>
</dbReference>
<dbReference type="GO" id="GO:0106411">
    <property type="term" value="F:XMP 5'-nucleosidase activity"/>
    <property type="evidence" value="ECO:0007669"/>
    <property type="project" value="RHEA"/>
</dbReference>
<dbReference type="GO" id="GO:0046054">
    <property type="term" value="P:dGMP metabolic process"/>
    <property type="evidence" value="ECO:0000250"/>
    <property type="project" value="UniProtKB"/>
</dbReference>
<dbReference type="GO" id="GO:0046037">
    <property type="term" value="P:GMP metabolic process"/>
    <property type="evidence" value="ECO:0000250"/>
    <property type="project" value="UniProtKB"/>
</dbReference>
<dbReference type="GO" id="GO:0046040">
    <property type="term" value="P:IMP metabolic process"/>
    <property type="evidence" value="ECO:0000250"/>
    <property type="project" value="UniProtKB"/>
</dbReference>
<dbReference type="CDD" id="cd07522">
    <property type="entry name" value="HAD_cN-II"/>
    <property type="match status" value="1"/>
</dbReference>
<dbReference type="FunFam" id="3.40.50.1000:FF:000021">
    <property type="entry name" value="NT5C2 isoform 1"/>
    <property type="match status" value="1"/>
</dbReference>
<dbReference type="Gene3D" id="3.40.50.1000">
    <property type="entry name" value="HAD superfamily/HAD-like"/>
    <property type="match status" value="2"/>
</dbReference>
<dbReference type="InterPro" id="IPR036412">
    <property type="entry name" value="HAD-like_sf"/>
</dbReference>
<dbReference type="InterPro" id="IPR008380">
    <property type="entry name" value="HAD-SF_hydro_IG_5-nucl"/>
</dbReference>
<dbReference type="InterPro" id="IPR023214">
    <property type="entry name" value="HAD_sf"/>
</dbReference>
<dbReference type="InterPro" id="IPR016695">
    <property type="entry name" value="Pur_nucleotidase"/>
</dbReference>
<dbReference type="NCBIfam" id="TIGR02244">
    <property type="entry name" value="HAD-IG-Ncltidse"/>
    <property type="match status" value="1"/>
</dbReference>
<dbReference type="PANTHER" id="PTHR12103">
    <property type="entry name" value="5'-NUCLEOTIDASE DOMAIN-CONTAINING"/>
    <property type="match status" value="1"/>
</dbReference>
<dbReference type="PANTHER" id="PTHR12103:SF17">
    <property type="entry name" value="CYTOSOLIC PURINE 5'-NUCLEOTIDASE"/>
    <property type="match status" value="1"/>
</dbReference>
<dbReference type="Pfam" id="PF05761">
    <property type="entry name" value="5_nucleotid"/>
    <property type="match status" value="1"/>
</dbReference>
<dbReference type="PIRSF" id="PIRSF017434">
    <property type="entry name" value="Purine_5'-nucleotidase"/>
    <property type="match status" value="1"/>
</dbReference>
<dbReference type="SUPFAM" id="SSF56784">
    <property type="entry name" value="HAD-like"/>
    <property type="match status" value="1"/>
</dbReference>
<evidence type="ECO:0000250" key="1">
    <source>
        <dbReference type="UniProtKB" id="D3ZMY7"/>
    </source>
</evidence>
<evidence type="ECO:0000250" key="2">
    <source>
        <dbReference type="UniProtKB" id="P49902"/>
    </source>
</evidence>
<evidence type="ECO:0000256" key="3">
    <source>
        <dbReference type="SAM" id="MobiDB-lite"/>
    </source>
</evidence>
<evidence type="ECO:0000305" key="4"/>